<sequence>MAKPATVKIKLVSTADTGFYYVTKKNPRNITEKMTFRKYDPVVRKHVEFKEAKIK</sequence>
<name>RL33_ERYLH</name>
<feature type="chain" id="PRO_1000078911" description="Large ribosomal subunit protein bL33">
    <location>
        <begin position="1"/>
        <end position="55"/>
    </location>
</feature>
<evidence type="ECO:0000255" key="1">
    <source>
        <dbReference type="HAMAP-Rule" id="MF_00294"/>
    </source>
</evidence>
<evidence type="ECO:0000305" key="2"/>
<accession>Q2N758</accession>
<protein>
    <recommendedName>
        <fullName evidence="1">Large ribosomal subunit protein bL33</fullName>
    </recommendedName>
    <alternativeName>
        <fullName evidence="2">50S ribosomal protein L33</fullName>
    </alternativeName>
</protein>
<organism>
    <name type="scientific">Erythrobacter litoralis (strain HTCC2594)</name>
    <dbReference type="NCBI Taxonomy" id="314225"/>
    <lineage>
        <taxon>Bacteria</taxon>
        <taxon>Pseudomonadati</taxon>
        <taxon>Pseudomonadota</taxon>
        <taxon>Alphaproteobacteria</taxon>
        <taxon>Sphingomonadales</taxon>
        <taxon>Erythrobacteraceae</taxon>
        <taxon>Erythrobacter/Porphyrobacter group</taxon>
        <taxon>Erythrobacter</taxon>
    </lineage>
</organism>
<dbReference type="EMBL" id="CP000157">
    <property type="protein sequence ID" value="ABC64483.1"/>
    <property type="molecule type" value="Genomic_DNA"/>
</dbReference>
<dbReference type="RefSeq" id="WP_010233410.1">
    <property type="nucleotide sequence ID" value="NC_007722.1"/>
</dbReference>
<dbReference type="SMR" id="Q2N758"/>
<dbReference type="STRING" id="314225.ELI_11955"/>
<dbReference type="KEGG" id="eli:ELI_11955"/>
<dbReference type="eggNOG" id="COG0267">
    <property type="taxonomic scope" value="Bacteria"/>
</dbReference>
<dbReference type="HOGENOM" id="CLU_190949_1_1_5"/>
<dbReference type="OrthoDB" id="21586at2"/>
<dbReference type="Proteomes" id="UP000008808">
    <property type="component" value="Chromosome"/>
</dbReference>
<dbReference type="GO" id="GO:0022625">
    <property type="term" value="C:cytosolic large ribosomal subunit"/>
    <property type="evidence" value="ECO:0007669"/>
    <property type="project" value="TreeGrafter"/>
</dbReference>
<dbReference type="GO" id="GO:0003735">
    <property type="term" value="F:structural constituent of ribosome"/>
    <property type="evidence" value="ECO:0007669"/>
    <property type="project" value="InterPro"/>
</dbReference>
<dbReference type="GO" id="GO:0006412">
    <property type="term" value="P:translation"/>
    <property type="evidence" value="ECO:0007669"/>
    <property type="project" value="UniProtKB-UniRule"/>
</dbReference>
<dbReference type="Gene3D" id="2.20.28.120">
    <property type="entry name" value="Ribosomal protein L33"/>
    <property type="match status" value="1"/>
</dbReference>
<dbReference type="HAMAP" id="MF_00294">
    <property type="entry name" value="Ribosomal_bL33"/>
    <property type="match status" value="1"/>
</dbReference>
<dbReference type="InterPro" id="IPR001705">
    <property type="entry name" value="Ribosomal_bL33"/>
</dbReference>
<dbReference type="InterPro" id="IPR018264">
    <property type="entry name" value="Ribosomal_bL33_CS"/>
</dbReference>
<dbReference type="InterPro" id="IPR038584">
    <property type="entry name" value="Ribosomal_bL33_sf"/>
</dbReference>
<dbReference type="InterPro" id="IPR011332">
    <property type="entry name" value="Ribosomal_zn-bd"/>
</dbReference>
<dbReference type="NCBIfam" id="NF001860">
    <property type="entry name" value="PRK00595.1"/>
    <property type="match status" value="1"/>
</dbReference>
<dbReference type="NCBIfam" id="TIGR01023">
    <property type="entry name" value="rpmG_bact"/>
    <property type="match status" value="1"/>
</dbReference>
<dbReference type="PANTHER" id="PTHR15238">
    <property type="entry name" value="54S RIBOSOMAL PROTEIN L39, MITOCHONDRIAL"/>
    <property type="match status" value="1"/>
</dbReference>
<dbReference type="PANTHER" id="PTHR15238:SF1">
    <property type="entry name" value="LARGE RIBOSOMAL SUBUNIT PROTEIN BL33M"/>
    <property type="match status" value="1"/>
</dbReference>
<dbReference type="Pfam" id="PF00471">
    <property type="entry name" value="Ribosomal_L33"/>
    <property type="match status" value="1"/>
</dbReference>
<dbReference type="SUPFAM" id="SSF57829">
    <property type="entry name" value="Zn-binding ribosomal proteins"/>
    <property type="match status" value="1"/>
</dbReference>
<dbReference type="PROSITE" id="PS00582">
    <property type="entry name" value="RIBOSOMAL_L33"/>
    <property type="match status" value="1"/>
</dbReference>
<proteinExistence type="inferred from homology"/>
<gene>
    <name evidence="1" type="primary">rpmG</name>
    <name type="ordered locus">ELI_11955</name>
</gene>
<comment type="similarity">
    <text evidence="1">Belongs to the bacterial ribosomal protein bL33 family.</text>
</comment>
<reference key="1">
    <citation type="journal article" date="2009" name="J. Bacteriol.">
        <title>Complete genome sequence of Erythrobacter litoralis HTCC2594.</title>
        <authorList>
            <person name="Oh H.M."/>
            <person name="Giovannoni S.J."/>
            <person name="Ferriera S."/>
            <person name="Johnson J."/>
            <person name="Cho J.C."/>
        </authorList>
    </citation>
    <scope>NUCLEOTIDE SEQUENCE [LARGE SCALE GENOMIC DNA]</scope>
    <source>
        <strain>HTCC2594</strain>
    </source>
</reference>
<keyword id="KW-1185">Reference proteome</keyword>
<keyword id="KW-0687">Ribonucleoprotein</keyword>
<keyword id="KW-0689">Ribosomal protein</keyword>